<protein>
    <recommendedName>
        <fullName>Myeloid zinc finger 1</fullName>
        <shortName>MZF-1</shortName>
    </recommendedName>
    <alternativeName>
        <fullName>Zinc finger and SCAN domain-containing protein 6</fullName>
    </alternativeName>
    <alternativeName>
        <fullName>Zinc finger protein 42</fullName>
    </alternativeName>
</protein>
<organism>
    <name type="scientific">Homo sapiens</name>
    <name type="common">Human</name>
    <dbReference type="NCBI Taxonomy" id="9606"/>
    <lineage>
        <taxon>Eukaryota</taxon>
        <taxon>Metazoa</taxon>
        <taxon>Chordata</taxon>
        <taxon>Craniata</taxon>
        <taxon>Vertebrata</taxon>
        <taxon>Euteleostomi</taxon>
        <taxon>Mammalia</taxon>
        <taxon>Eutheria</taxon>
        <taxon>Euarchontoglires</taxon>
        <taxon>Primates</taxon>
        <taxon>Haplorrhini</taxon>
        <taxon>Catarrhini</taxon>
        <taxon>Hominidae</taxon>
        <taxon>Homo</taxon>
    </lineage>
</organism>
<feature type="chain" id="PRO_0000047375" description="Myeloid zinc finger 1">
    <location>
        <begin position="1"/>
        <end position="734"/>
    </location>
</feature>
<feature type="domain" description="SCAN box" evidence="2">
    <location>
        <begin position="44"/>
        <end position="125"/>
    </location>
</feature>
<feature type="zinc finger region" description="C2H2-type 1" evidence="1">
    <location>
        <begin position="356"/>
        <end position="378"/>
    </location>
</feature>
<feature type="zinc finger region" description="C2H2-type 2" evidence="1">
    <location>
        <begin position="384"/>
        <end position="406"/>
    </location>
</feature>
<feature type="zinc finger region" description="C2H2-type 3" evidence="1">
    <location>
        <begin position="412"/>
        <end position="434"/>
    </location>
</feature>
<feature type="zinc finger region" description="C2H2-type 4" evidence="1">
    <location>
        <begin position="440"/>
        <end position="462"/>
    </location>
</feature>
<feature type="zinc finger region" description="C2H2-type 5" evidence="1">
    <location>
        <begin position="485"/>
        <end position="507"/>
    </location>
</feature>
<feature type="zinc finger region" description="C2H2-type 6" evidence="1">
    <location>
        <begin position="513"/>
        <end position="535"/>
    </location>
</feature>
<feature type="zinc finger region" description="C2H2-type 7" evidence="1">
    <location>
        <begin position="541"/>
        <end position="563"/>
    </location>
</feature>
<feature type="zinc finger region" description="C2H2-type 8" evidence="1">
    <location>
        <begin position="569"/>
        <end position="591"/>
    </location>
</feature>
<feature type="zinc finger region" description="C2H2-type 9" evidence="1">
    <location>
        <begin position="597"/>
        <end position="619"/>
    </location>
</feature>
<feature type="zinc finger region" description="C2H2-type 10" evidence="1">
    <location>
        <begin position="625"/>
        <end position="647"/>
    </location>
</feature>
<feature type="zinc finger region" description="C2H2-type 11" evidence="1">
    <location>
        <begin position="653"/>
        <end position="675"/>
    </location>
</feature>
<feature type="zinc finger region" description="C2H2-type 12" evidence="1">
    <location>
        <begin position="681"/>
        <end position="703"/>
    </location>
</feature>
<feature type="zinc finger region" description="C2H2-type 13" evidence="1">
    <location>
        <begin position="709"/>
        <end position="731"/>
    </location>
</feature>
<feature type="region of interest" description="Disordered" evidence="3">
    <location>
        <begin position="144"/>
        <end position="196"/>
    </location>
</feature>
<feature type="region of interest" description="Disordered" evidence="3">
    <location>
        <begin position="459"/>
        <end position="485"/>
    </location>
</feature>
<feature type="compositionally biased region" description="Pro residues" evidence="3">
    <location>
        <begin position="157"/>
        <end position="170"/>
    </location>
</feature>
<feature type="compositionally biased region" description="Pro residues" evidence="3">
    <location>
        <begin position="465"/>
        <end position="485"/>
    </location>
</feature>
<feature type="modified residue" description="Phosphoserine" evidence="12">
    <location>
        <position position="111"/>
    </location>
</feature>
<feature type="cross-link" description="Glycyl lysine isopeptide (Lys-Gly) (interchain with G-Cter in SUMO2)" evidence="13">
    <location>
        <position position="723"/>
    </location>
</feature>
<feature type="splice variant" id="VSP_006889" description="In isoform MZF1B-C." evidence="9">
    <location>
        <begin position="1"/>
        <end position="249"/>
    </location>
</feature>
<feature type="splice variant" id="VSP_006890" description="In isoform MZF1B-C." evidence="9">
    <original>EAGGIFSP</original>
    <variation>MNGPLVYA</variation>
    <location>
        <begin position="250"/>
        <end position="257"/>
    </location>
</feature>
<feature type="splice variant" id="VSP_047013" description="In isoform 3." evidence="10">
    <original>FALQLGSISAGPGSVSPHLHVPWDLGMAGLSG</original>
    <variation>AGAGAAPALGAGWLGAAVAMYVARCSANAATC</variation>
    <location>
        <begin position="259"/>
        <end position="290"/>
    </location>
</feature>
<feature type="splice variant" id="VSP_047014" description="In isoform 3." evidence="10">
    <location>
        <begin position="291"/>
        <end position="734"/>
    </location>
</feature>
<feature type="sequence variant" id="VAR_047677" description="In dbSNP:rs3752109." evidence="4 5">
    <original>R</original>
    <variation>H</variation>
    <location>
        <position position="51"/>
    </location>
</feature>
<feature type="sequence variant" id="VAR_047678" description="In dbSNP:rs3752110.">
    <original>R</original>
    <variation>H</variation>
    <location>
        <position position="103"/>
    </location>
</feature>
<feature type="sequence variant" id="VAR_047679" description="In dbSNP:rs3752111.">
    <original>R</original>
    <variation>Q</variation>
    <location>
        <position position="130"/>
    </location>
</feature>
<feature type="sequence variant" id="VAR_014826" description="In dbSNP:rs4756.">
    <original>I</original>
    <variation>V</variation>
    <location>
        <position position="331"/>
    </location>
</feature>
<feature type="sequence variant" id="VAR_047680" description="In dbSNP:rs2229255.">
    <original>R</original>
    <variation>P</variation>
    <location>
        <position position="441"/>
    </location>
</feature>
<feature type="sequence conflict" description="In Ref. 1; AAA59898." evidence="11" ref="1">
    <original>AL</original>
    <variation>RV</variation>
    <location>
        <begin position="304"/>
        <end position="305"/>
    </location>
</feature>
<feature type="helix" evidence="14">
    <location>
        <begin position="40"/>
        <end position="48"/>
    </location>
</feature>
<feature type="turn" evidence="14">
    <location>
        <begin position="54"/>
        <end position="56"/>
    </location>
</feature>
<feature type="helix" evidence="14">
    <location>
        <begin position="58"/>
        <end position="73"/>
    </location>
</feature>
<feature type="turn" evidence="14">
    <location>
        <begin position="75"/>
        <end position="77"/>
    </location>
</feature>
<feature type="helix" evidence="14">
    <location>
        <begin position="80"/>
        <end position="95"/>
    </location>
</feature>
<feature type="helix" evidence="14">
    <location>
        <begin position="98"/>
        <end position="107"/>
    </location>
</feature>
<feature type="helix" evidence="14">
    <location>
        <begin position="112"/>
        <end position="122"/>
    </location>
</feature>
<feature type="turn" evidence="14">
    <location>
        <begin position="123"/>
        <end position="127"/>
    </location>
</feature>
<comment type="function">
    <text evidence="6 8">Binds to target promoter DNA and functions as a transcription regulator. Regulates transcription from the PADI1 and CDH2 promoter. May be one regulator of transcriptional events during hemopoietic development.</text>
</comment>
<comment type="subunit">
    <text evidence="7">Homodimer.</text>
</comment>
<comment type="subcellular location">
    <subcellularLocation>
        <location>Nucleus</location>
    </subcellularLocation>
</comment>
<comment type="alternative products">
    <event type="alternative splicing"/>
    <isoform>
        <id>P28698-1</id>
        <name>MZF1A</name>
        <name>MZF1B</name>
        <sequence type="displayed"/>
    </isoform>
    <isoform>
        <id>P28698-2</id>
        <name>MZF1B-C</name>
        <sequence type="described" ref="VSP_006889 VSP_006890"/>
    </isoform>
    <isoform>
        <id>P28698-3</id>
        <name>3</name>
        <sequence type="described" ref="VSP_047013 VSP_047014"/>
    </isoform>
</comment>
<comment type="tissue specificity">
    <text evidence="6">Preferentially expressed in differentiating myeloid cells. Detected in osteoblasts.</text>
</comment>
<comment type="induction">
    <text>By retinoic acid.</text>
</comment>
<comment type="similarity">
    <text evidence="11">Belongs to the krueppel C2H2-type zinc-finger protein family.</text>
</comment>
<gene>
    <name type="primary">MZF1</name>
    <name type="synonym">MZF</name>
    <name type="synonym">ZNF42</name>
    <name type="synonym">ZSCAN6</name>
</gene>
<accession>P28698</accession>
<accession>M0QXU0</accession>
<accession>Q7Z729</accession>
<accession>Q96I71</accession>
<accession>Q9NRY0</accession>
<accession>Q9UBW2</accession>
<dbReference type="EMBL" id="M58297">
    <property type="protein sequence ID" value="AAA59898.1"/>
    <property type="molecule type" value="mRNA"/>
</dbReference>
<dbReference type="EMBL" id="AF055077">
    <property type="protein sequence ID" value="AAD55809.1"/>
    <property type="molecule type" value="mRNA"/>
</dbReference>
<dbReference type="EMBL" id="AF055078">
    <property type="protein sequence ID" value="AAD55810.1"/>
    <property type="molecule type" value="mRNA"/>
</dbReference>
<dbReference type="EMBL" id="AF161886">
    <property type="protein sequence ID" value="AAF80465.1"/>
    <property type="molecule type" value="Genomic_DNA"/>
</dbReference>
<dbReference type="EMBL" id="AF161886">
    <property type="protein sequence ID" value="AAF80466.1"/>
    <property type="molecule type" value="Genomic_DNA"/>
</dbReference>
<dbReference type="EMBL" id="AC016629">
    <property type="status" value="NOT_ANNOTATED_CDS"/>
    <property type="molecule type" value="Genomic_DNA"/>
</dbReference>
<dbReference type="EMBL" id="AC016630">
    <property type="status" value="NOT_ANNOTATED_CDS"/>
    <property type="molecule type" value="Genomic_DNA"/>
</dbReference>
<dbReference type="EMBL" id="CH471135">
    <property type="protein sequence ID" value="EAW72617.1"/>
    <property type="molecule type" value="Genomic_DNA"/>
</dbReference>
<dbReference type="EMBL" id="BC007777">
    <property type="protein sequence ID" value="AAH07777.1"/>
    <property type="molecule type" value="mRNA"/>
</dbReference>
<dbReference type="EMBL" id="BC053316">
    <property type="protein sequence ID" value="AAH53316.1"/>
    <property type="molecule type" value="mRNA"/>
</dbReference>
<dbReference type="CCDS" id="CCDS12988.1">
    <molecule id="P28698-1"/>
</dbReference>
<dbReference type="CCDS" id="CCDS59427.1">
    <molecule id="P28698-3"/>
</dbReference>
<dbReference type="PIR" id="A40751">
    <property type="entry name" value="A40751"/>
</dbReference>
<dbReference type="RefSeq" id="NP_001253962.1">
    <molecule id="P28698-3"/>
    <property type="nucleotide sequence ID" value="NM_001267033.2"/>
</dbReference>
<dbReference type="RefSeq" id="NP_003413.2">
    <molecule id="P28698-1"/>
    <property type="nucleotide sequence ID" value="NM_003422.2"/>
</dbReference>
<dbReference type="RefSeq" id="NP_932172.1">
    <molecule id="P28698-1"/>
    <property type="nucleotide sequence ID" value="NM_198055.2"/>
</dbReference>
<dbReference type="PDB" id="2FI2">
    <property type="method" value="NMR"/>
    <property type="chains" value="A/B=37-128"/>
</dbReference>
<dbReference type="PDBsum" id="2FI2"/>
<dbReference type="BMRB" id="P28698"/>
<dbReference type="SMR" id="P28698"/>
<dbReference type="BioGRID" id="113419">
    <property type="interactions" value="29"/>
</dbReference>
<dbReference type="FunCoup" id="P28698">
    <property type="interactions" value="525"/>
</dbReference>
<dbReference type="IntAct" id="P28698">
    <property type="interactions" value="22"/>
</dbReference>
<dbReference type="STRING" id="9606.ENSP00000215057"/>
<dbReference type="GlyGen" id="P28698">
    <property type="glycosylation" value="3 sites, 1 O-linked glycan (2 sites)"/>
</dbReference>
<dbReference type="iPTMnet" id="P28698"/>
<dbReference type="PhosphoSitePlus" id="P28698"/>
<dbReference type="BioMuta" id="MZF1"/>
<dbReference type="DMDM" id="215274121"/>
<dbReference type="jPOST" id="P28698"/>
<dbReference type="MassIVE" id="P28698"/>
<dbReference type="PaxDb" id="9606-ENSP00000215057"/>
<dbReference type="PeptideAtlas" id="P28698"/>
<dbReference type="ProteomicsDB" id="54492">
    <molecule id="P28698-1"/>
</dbReference>
<dbReference type="ProteomicsDB" id="54493">
    <molecule id="P28698-2"/>
</dbReference>
<dbReference type="ABCD" id="P28698">
    <property type="antibodies" value="3 sequenced antibodies"/>
</dbReference>
<dbReference type="Antibodypedia" id="914">
    <property type="antibodies" value="171 antibodies from 27 providers"/>
</dbReference>
<dbReference type="DNASU" id="7593"/>
<dbReference type="Ensembl" id="ENST00000215057.7">
    <molecule id="P28698-1"/>
    <property type="protein sequence ID" value="ENSP00000215057.1"/>
    <property type="gene ID" value="ENSG00000099326.9"/>
</dbReference>
<dbReference type="Ensembl" id="ENST00000594234.5">
    <molecule id="P28698-3"/>
    <property type="protein sequence ID" value="ENSP00000469378.1"/>
    <property type="gene ID" value="ENSG00000099326.9"/>
</dbReference>
<dbReference type="Ensembl" id="ENST00000599369.5">
    <molecule id="P28698-1"/>
    <property type="protein sequence ID" value="ENSP00000469493.1"/>
    <property type="gene ID" value="ENSG00000099326.9"/>
</dbReference>
<dbReference type="GeneID" id="7593"/>
<dbReference type="KEGG" id="hsa:7593"/>
<dbReference type="MANE-Select" id="ENST00000215057.7">
    <property type="protein sequence ID" value="ENSP00000215057.1"/>
    <property type="RefSeq nucleotide sequence ID" value="NM_198055.2"/>
    <property type="RefSeq protein sequence ID" value="NP_932172.1"/>
</dbReference>
<dbReference type="UCSC" id="uc002qtn.4">
    <molecule id="P28698-1"/>
    <property type="organism name" value="human"/>
</dbReference>
<dbReference type="AGR" id="HGNC:13108"/>
<dbReference type="CTD" id="7593"/>
<dbReference type="DisGeNET" id="7593"/>
<dbReference type="GeneCards" id="MZF1"/>
<dbReference type="HGNC" id="HGNC:13108">
    <property type="gene designation" value="MZF1"/>
</dbReference>
<dbReference type="HPA" id="ENSG00000099326">
    <property type="expression patterns" value="Low tissue specificity"/>
</dbReference>
<dbReference type="MIM" id="194550">
    <property type="type" value="gene"/>
</dbReference>
<dbReference type="neXtProt" id="NX_P28698"/>
<dbReference type="OpenTargets" id="ENSG00000099326"/>
<dbReference type="PharmGKB" id="PA37683"/>
<dbReference type="VEuPathDB" id="HostDB:ENSG00000099326"/>
<dbReference type="eggNOG" id="KOG1721">
    <property type="taxonomic scope" value="Eukaryota"/>
</dbReference>
<dbReference type="GeneTree" id="ENSGT00950000182890"/>
<dbReference type="HOGENOM" id="CLU_002678_49_8_1"/>
<dbReference type="InParanoid" id="P28698"/>
<dbReference type="OMA" id="CEGGFAH"/>
<dbReference type="OrthoDB" id="6077919at2759"/>
<dbReference type="PAN-GO" id="P28698">
    <property type="GO annotations" value="3 GO annotations based on evolutionary models"/>
</dbReference>
<dbReference type="PhylomeDB" id="P28698"/>
<dbReference type="TreeFam" id="TF337913"/>
<dbReference type="PathwayCommons" id="P28698"/>
<dbReference type="SignaLink" id="P28698"/>
<dbReference type="SIGNOR" id="P28698"/>
<dbReference type="BioGRID-ORCS" id="7593">
    <property type="hits" value="107 hits in 1180 CRISPR screens"/>
</dbReference>
<dbReference type="ChiTaRS" id="MZF1">
    <property type="organism name" value="human"/>
</dbReference>
<dbReference type="EvolutionaryTrace" id="P28698"/>
<dbReference type="GeneWiki" id="MZF1"/>
<dbReference type="GenomeRNAi" id="7593"/>
<dbReference type="Pharos" id="P28698">
    <property type="development level" value="Tbio"/>
</dbReference>
<dbReference type="PRO" id="PR:P28698"/>
<dbReference type="Proteomes" id="UP000005640">
    <property type="component" value="Chromosome 19"/>
</dbReference>
<dbReference type="RNAct" id="P28698">
    <property type="molecule type" value="protein"/>
</dbReference>
<dbReference type="Bgee" id="ENSG00000099326">
    <property type="expression patterns" value="Expressed in pancreatic ductal cell and 199 other cell types or tissues"/>
</dbReference>
<dbReference type="ExpressionAtlas" id="P28698">
    <property type="expression patterns" value="baseline and differential"/>
</dbReference>
<dbReference type="GO" id="GO:0005654">
    <property type="term" value="C:nucleoplasm"/>
    <property type="evidence" value="ECO:0000314"/>
    <property type="project" value="HPA"/>
</dbReference>
<dbReference type="GO" id="GO:0001228">
    <property type="term" value="F:DNA-binding transcription activator activity, RNA polymerase II-specific"/>
    <property type="evidence" value="ECO:0000314"/>
    <property type="project" value="NTNU_SB"/>
</dbReference>
<dbReference type="GO" id="GO:0003700">
    <property type="term" value="F:DNA-binding transcription factor activity"/>
    <property type="evidence" value="ECO:0000303"/>
    <property type="project" value="ProtInc"/>
</dbReference>
<dbReference type="GO" id="GO:0000981">
    <property type="term" value="F:DNA-binding transcription factor activity, RNA polymerase II-specific"/>
    <property type="evidence" value="ECO:0000318"/>
    <property type="project" value="GO_Central"/>
</dbReference>
<dbReference type="GO" id="GO:0001227">
    <property type="term" value="F:DNA-binding transcription repressor activity, RNA polymerase II-specific"/>
    <property type="evidence" value="ECO:0000314"/>
    <property type="project" value="NTNU_SB"/>
</dbReference>
<dbReference type="GO" id="GO:0042803">
    <property type="term" value="F:protein homodimerization activity"/>
    <property type="evidence" value="ECO:0000353"/>
    <property type="project" value="UniProtKB"/>
</dbReference>
<dbReference type="GO" id="GO:0000978">
    <property type="term" value="F:RNA polymerase II cis-regulatory region sequence-specific DNA binding"/>
    <property type="evidence" value="ECO:0000314"/>
    <property type="project" value="NTNU_SB"/>
</dbReference>
<dbReference type="GO" id="GO:0000976">
    <property type="term" value="F:transcription cis-regulatory region binding"/>
    <property type="evidence" value="ECO:0000314"/>
    <property type="project" value="UniProtKB"/>
</dbReference>
<dbReference type="GO" id="GO:0008270">
    <property type="term" value="F:zinc ion binding"/>
    <property type="evidence" value="ECO:0007669"/>
    <property type="project" value="UniProtKB-KW"/>
</dbReference>
<dbReference type="GO" id="GO:0000122">
    <property type="term" value="P:negative regulation of transcription by RNA polymerase II"/>
    <property type="evidence" value="ECO:0000314"/>
    <property type="project" value="NTNU_SB"/>
</dbReference>
<dbReference type="GO" id="GO:0045944">
    <property type="term" value="P:positive regulation of transcription by RNA polymerase II"/>
    <property type="evidence" value="ECO:0000314"/>
    <property type="project" value="NTNU_SB"/>
</dbReference>
<dbReference type="GO" id="GO:0006355">
    <property type="term" value="P:regulation of DNA-templated transcription"/>
    <property type="evidence" value="ECO:0000314"/>
    <property type="project" value="UniProtKB"/>
</dbReference>
<dbReference type="CDD" id="cd07936">
    <property type="entry name" value="SCAN"/>
    <property type="match status" value="1"/>
</dbReference>
<dbReference type="DisProt" id="DP02096"/>
<dbReference type="FunFam" id="3.30.160.60:FF:000508">
    <property type="entry name" value="Myeloid zinc finger 1"/>
    <property type="match status" value="3"/>
</dbReference>
<dbReference type="FunFam" id="3.30.160.60:FF:000321">
    <property type="entry name" value="myeloid zinc finger 1 isoform X1"/>
    <property type="match status" value="3"/>
</dbReference>
<dbReference type="FunFam" id="3.30.160.60:FF:000647">
    <property type="entry name" value="myeloid zinc finger 1 isoform X1"/>
    <property type="match status" value="2"/>
</dbReference>
<dbReference type="FunFam" id="3.30.160.60:FF:000799">
    <property type="entry name" value="myeloid zinc finger 1 isoform X1"/>
    <property type="match status" value="1"/>
</dbReference>
<dbReference type="FunFam" id="3.30.160.60:FF:001243">
    <property type="entry name" value="myeloid zinc finger 1 isoform X1"/>
    <property type="match status" value="1"/>
</dbReference>
<dbReference type="FunFam" id="1.10.4020.10:FF:000001">
    <property type="entry name" value="zinc finger protein 263 isoform X1"/>
    <property type="match status" value="1"/>
</dbReference>
<dbReference type="FunFam" id="3.30.160.60:FF:002343">
    <property type="entry name" value="Zinc finger protein 33A"/>
    <property type="match status" value="2"/>
</dbReference>
<dbReference type="FunFam" id="3.30.160.60:FF:001270">
    <property type="entry name" value="zinc finger protein 583 isoform X1"/>
    <property type="match status" value="1"/>
</dbReference>
<dbReference type="Gene3D" id="3.30.160.60">
    <property type="entry name" value="Classic Zinc Finger"/>
    <property type="match status" value="13"/>
</dbReference>
<dbReference type="Gene3D" id="1.10.4020.10">
    <property type="entry name" value="DNA breaking-rejoining enzymes"/>
    <property type="match status" value="1"/>
</dbReference>
<dbReference type="InterPro" id="IPR003309">
    <property type="entry name" value="SCAN_dom"/>
</dbReference>
<dbReference type="InterPro" id="IPR038269">
    <property type="entry name" value="SCAN_sf"/>
</dbReference>
<dbReference type="InterPro" id="IPR036236">
    <property type="entry name" value="Znf_C2H2_sf"/>
</dbReference>
<dbReference type="InterPro" id="IPR013087">
    <property type="entry name" value="Znf_C2H2_type"/>
</dbReference>
<dbReference type="PANTHER" id="PTHR24393:SF158">
    <property type="entry name" value="C2H2-TYPE DOMAIN-CONTAINING PROTEIN"/>
    <property type="match status" value="1"/>
</dbReference>
<dbReference type="PANTHER" id="PTHR24393">
    <property type="entry name" value="ZINC FINGER PROTEIN"/>
    <property type="match status" value="1"/>
</dbReference>
<dbReference type="Pfam" id="PF02023">
    <property type="entry name" value="SCAN"/>
    <property type="match status" value="1"/>
</dbReference>
<dbReference type="Pfam" id="PF00096">
    <property type="entry name" value="zf-C2H2"/>
    <property type="match status" value="11"/>
</dbReference>
<dbReference type="SMART" id="SM00431">
    <property type="entry name" value="SCAN"/>
    <property type="match status" value="1"/>
</dbReference>
<dbReference type="SMART" id="SM00355">
    <property type="entry name" value="ZnF_C2H2"/>
    <property type="match status" value="13"/>
</dbReference>
<dbReference type="SUPFAM" id="SSF57667">
    <property type="entry name" value="beta-beta-alpha zinc fingers"/>
    <property type="match status" value="7"/>
</dbReference>
<dbReference type="SUPFAM" id="SSF47353">
    <property type="entry name" value="Retrovirus capsid dimerization domain-like"/>
    <property type="match status" value="1"/>
</dbReference>
<dbReference type="PROSITE" id="PS50804">
    <property type="entry name" value="SCAN_BOX"/>
    <property type="match status" value="1"/>
</dbReference>
<dbReference type="PROSITE" id="PS00028">
    <property type="entry name" value="ZINC_FINGER_C2H2_1"/>
    <property type="match status" value="13"/>
</dbReference>
<dbReference type="PROSITE" id="PS50157">
    <property type="entry name" value="ZINC_FINGER_C2H2_2"/>
    <property type="match status" value="13"/>
</dbReference>
<proteinExistence type="evidence at protein level"/>
<name>MZF1_HUMAN</name>
<sequence length="734" mass="82055">MRPAVLGSPDRAPPEDEGPVMVKLEDSEEEGEAALWDPGPEAARLRFRCFRYEEATGPQEALAQLRELCRQWLRPEVRSKEQMLELLVLEQFLGALPPEIQARVQGQRPGSPEEAAALVDGLRREPGGPRRWVTVQVQGQEVLSEKMEPSSFQPLPETEPPTPEPGPKTPPRTMQESPLGLQVKEESEVTEDSDFLESGPLAATQESVPTLLPEEAQRCGTVLDQIFPHSKTGPEGPSWREHPRALWHEEAGGIFSPGFALQLGSISAGPGSVSPHLHVPWDLGMAGLSGQIQSPSREGGFAHALLLPSDLRSEQDPTDEDPCRGVGPALITTRWRSPRGRSRGRPSTGGGVVRGGRCDVCGKVFSQRSNLLRHQKIHTGERPFVCSECGRSFSRSSHLLRHQLTHTEERPFVCGDCGQGFVRSARLEEHRRVHTGEQPFRCAECGQSFRQRSNLLQHQRIHGDPPGPGAKPPAPPGAPEPPGPFPCSECRESFARRAVLLEHQAVHTGDKSFGCVECGERFGRRSVLLQHRRVHSGERPFACAECGQSFRQRSNLTQHRRIHTGERPFACAECGKAFRQRPTLTQHLRVHTGEKPFACPECGQRFSQRLKLTRHQRTHTGEKPYHCGECGLGFTQVSRLTEHQRIHTGERPFACPECGQSFRQHANLTQHRRIHTGERPYACPECGKAFRQRPTLTQHLRTHRREKPFACQDCGRRFHQSTKLIQHQRVHSAE</sequence>
<evidence type="ECO:0000255" key="1">
    <source>
        <dbReference type="PROSITE-ProRule" id="PRU00042"/>
    </source>
</evidence>
<evidence type="ECO:0000255" key="2">
    <source>
        <dbReference type="PROSITE-ProRule" id="PRU00187"/>
    </source>
</evidence>
<evidence type="ECO:0000256" key="3">
    <source>
        <dbReference type="SAM" id="MobiDB-lite"/>
    </source>
</evidence>
<evidence type="ECO:0000269" key="4">
    <source>
    </source>
</evidence>
<evidence type="ECO:0000269" key="5">
    <source>
    </source>
</evidence>
<evidence type="ECO:0000269" key="6">
    <source>
    </source>
</evidence>
<evidence type="ECO:0000269" key="7">
    <source>
    </source>
</evidence>
<evidence type="ECO:0000269" key="8">
    <source>
    </source>
</evidence>
<evidence type="ECO:0000303" key="9">
    <source>
    </source>
</evidence>
<evidence type="ECO:0000303" key="10">
    <source>
    </source>
</evidence>
<evidence type="ECO:0000305" key="11"/>
<evidence type="ECO:0007744" key="12">
    <source>
    </source>
</evidence>
<evidence type="ECO:0007744" key="13">
    <source>
    </source>
</evidence>
<evidence type="ECO:0007829" key="14">
    <source>
        <dbReference type="PDB" id="2FI2"/>
    </source>
</evidence>
<keyword id="KW-0002">3D-structure</keyword>
<keyword id="KW-0025">Alternative splicing</keyword>
<keyword id="KW-0238">DNA-binding</keyword>
<keyword id="KW-1017">Isopeptide bond</keyword>
<keyword id="KW-0479">Metal-binding</keyword>
<keyword id="KW-0539">Nucleus</keyword>
<keyword id="KW-0597">Phosphoprotein</keyword>
<keyword id="KW-1267">Proteomics identification</keyword>
<keyword id="KW-1185">Reference proteome</keyword>
<keyword id="KW-0677">Repeat</keyword>
<keyword id="KW-0804">Transcription</keyword>
<keyword id="KW-0805">Transcription regulation</keyword>
<keyword id="KW-0832">Ubl conjugation</keyword>
<keyword id="KW-0862">Zinc</keyword>
<keyword id="KW-0863">Zinc-finger</keyword>
<reference key="1">
    <citation type="journal article" date="1991" name="J. Biol. Chem.">
        <title>A retinoic acid-responsive human zinc finger gene, MZF-1, preferentially expressed in myeloid cells.</title>
        <authorList>
            <person name="Hromas R."/>
            <person name="Collins S.J."/>
            <person name="Hickstein D."/>
            <person name="Raskind W."/>
            <person name="Deaven L.L."/>
            <person name="O'Hara P."/>
            <person name="Hagen F.S."/>
            <person name="Kaushansky K."/>
        </authorList>
    </citation>
    <scope>NUCLEOTIDE SEQUENCE [MRNA] (ISOFORM MZF1A)</scope>
</reference>
<reference key="2">
    <citation type="journal article" date="2000" name="Gene">
        <title>Human myeloid zinc finger gene MZF produces multiple transcripts and encodes a SCAN box protein.</title>
        <authorList>
            <person name="Peterson M.J."/>
            <person name="Morris J.F."/>
        </authorList>
    </citation>
    <scope>NUCLEOTIDE SEQUENCE [GENOMIC DNA / MRNA] (ISOFORMS MZF1A AND MZF1B-C)</scope>
    <scope>VARIANT HIS-51</scope>
    <source>
        <tissue>Bone marrow</tissue>
    </source>
</reference>
<reference key="3">
    <citation type="journal article" date="2004" name="Nature">
        <title>The DNA sequence and biology of human chromosome 19.</title>
        <authorList>
            <person name="Grimwood J."/>
            <person name="Gordon L.A."/>
            <person name="Olsen A.S."/>
            <person name="Terry A."/>
            <person name="Schmutz J."/>
            <person name="Lamerdin J.E."/>
            <person name="Hellsten U."/>
            <person name="Goodstein D."/>
            <person name="Couronne O."/>
            <person name="Tran-Gyamfi M."/>
            <person name="Aerts A."/>
            <person name="Altherr M."/>
            <person name="Ashworth L."/>
            <person name="Bajorek E."/>
            <person name="Black S."/>
            <person name="Branscomb E."/>
            <person name="Caenepeel S."/>
            <person name="Carrano A.V."/>
            <person name="Caoile C."/>
            <person name="Chan Y.M."/>
            <person name="Christensen M."/>
            <person name="Cleland C.A."/>
            <person name="Copeland A."/>
            <person name="Dalin E."/>
            <person name="Dehal P."/>
            <person name="Denys M."/>
            <person name="Detter J.C."/>
            <person name="Escobar J."/>
            <person name="Flowers D."/>
            <person name="Fotopulos D."/>
            <person name="Garcia C."/>
            <person name="Georgescu A.M."/>
            <person name="Glavina T."/>
            <person name="Gomez M."/>
            <person name="Gonzales E."/>
            <person name="Groza M."/>
            <person name="Hammon N."/>
            <person name="Hawkins T."/>
            <person name="Haydu L."/>
            <person name="Ho I."/>
            <person name="Huang W."/>
            <person name="Israni S."/>
            <person name="Jett J."/>
            <person name="Kadner K."/>
            <person name="Kimball H."/>
            <person name="Kobayashi A."/>
            <person name="Larionov V."/>
            <person name="Leem S.-H."/>
            <person name="Lopez F."/>
            <person name="Lou Y."/>
            <person name="Lowry S."/>
            <person name="Malfatti S."/>
            <person name="Martinez D."/>
            <person name="McCready P.M."/>
            <person name="Medina C."/>
            <person name="Morgan J."/>
            <person name="Nelson K."/>
            <person name="Nolan M."/>
            <person name="Ovcharenko I."/>
            <person name="Pitluck S."/>
            <person name="Pollard M."/>
            <person name="Popkie A.P."/>
            <person name="Predki P."/>
            <person name="Quan G."/>
            <person name="Ramirez L."/>
            <person name="Rash S."/>
            <person name="Retterer J."/>
            <person name="Rodriguez A."/>
            <person name="Rogers S."/>
            <person name="Salamov A."/>
            <person name="Salazar A."/>
            <person name="She X."/>
            <person name="Smith D."/>
            <person name="Slezak T."/>
            <person name="Solovyev V."/>
            <person name="Thayer N."/>
            <person name="Tice H."/>
            <person name="Tsai M."/>
            <person name="Ustaszewska A."/>
            <person name="Vo N."/>
            <person name="Wagner M."/>
            <person name="Wheeler J."/>
            <person name="Wu K."/>
            <person name="Xie G."/>
            <person name="Yang J."/>
            <person name="Dubchak I."/>
            <person name="Furey T.S."/>
            <person name="DeJong P."/>
            <person name="Dickson M."/>
            <person name="Gordon D."/>
            <person name="Eichler E.E."/>
            <person name="Pennacchio L.A."/>
            <person name="Richardson P."/>
            <person name="Stubbs L."/>
            <person name="Rokhsar D.S."/>
            <person name="Myers R.M."/>
            <person name="Rubin E.M."/>
            <person name="Lucas S.M."/>
        </authorList>
    </citation>
    <scope>NUCLEOTIDE SEQUENCE [LARGE SCALE GENOMIC DNA]</scope>
</reference>
<reference key="4">
    <citation type="submission" date="2005-07" db="EMBL/GenBank/DDBJ databases">
        <authorList>
            <person name="Mural R.J."/>
            <person name="Istrail S."/>
            <person name="Sutton G.G."/>
            <person name="Florea L."/>
            <person name="Halpern A.L."/>
            <person name="Mobarry C.M."/>
            <person name="Lippert R."/>
            <person name="Walenz B."/>
            <person name="Shatkay H."/>
            <person name="Dew I."/>
            <person name="Miller J.R."/>
            <person name="Flanigan M.J."/>
            <person name="Edwards N.J."/>
            <person name="Bolanos R."/>
            <person name="Fasulo D."/>
            <person name="Halldorsson B.V."/>
            <person name="Hannenhalli S."/>
            <person name="Turner R."/>
            <person name="Yooseph S."/>
            <person name="Lu F."/>
            <person name="Nusskern D.R."/>
            <person name="Shue B.C."/>
            <person name="Zheng X.H."/>
            <person name="Zhong F."/>
            <person name="Delcher A.L."/>
            <person name="Huson D.H."/>
            <person name="Kravitz S.A."/>
            <person name="Mouchard L."/>
            <person name="Reinert K."/>
            <person name="Remington K.A."/>
            <person name="Clark A.G."/>
            <person name="Waterman M.S."/>
            <person name="Eichler E.E."/>
            <person name="Adams M.D."/>
            <person name="Hunkapiller M.W."/>
            <person name="Myers E.W."/>
            <person name="Venter J.C."/>
        </authorList>
    </citation>
    <scope>NUCLEOTIDE SEQUENCE [LARGE SCALE GENOMIC DNA]</scope>
</reference>
<reference key="5">
    <citation type="journal article" date="2004" name="Genome Res.">
        <title>The status, quality, and expansion of the NIH full-length cDNA project: the Mammalian Gene Collection (MGC).</title>
        <authorList>
            <consortium name="The MGC Project Team"/>
        </authorList>
    </citation>
    <scope>NUCLEOTIDE SEQUENCE [LARGE SCALE MRNA] (ISOFORMS MZF1A AND 3)</scope>
    <scope>VARIANT HIS-51</scope>
    <source>
        <tissue>Skin</tissue>
        <tissue>Uterus</tissue>
    </source>
</reference>
<reference key="6">
    <citation type="journal article" date="2005" name="Exp. Cell Res.">
        <title>Sp1/Sp3 and the myeloid zinc finger gene MZF1 regulate the human N-cadherin promoter in osteoblasts.</title>
        <authorList>
            <person name="Le Mee S."/>
            <person name="Fromigue O."/>
            <person name="Marie P.J."/>
        </authorList>
    </citation>
    <scope>FUNCTION</scope>
    <scope>TISSUE SPECIFICITY</scope>
</reference>
<reference key="7">
    <citation type="journal article" date="2008" name="J. Invest. Dermatol.">
        <title>Crucial roles of MZF1 and Sp1 in the transcriptional regulation of the peptidylarginine deiminase type I gene (PADI1) in human keratinocytes.</title>
        <authorList>
            <person name="Dong S."/>
            <person name="Ying S."/>
            <person name="Kojima T."/>
            <person name="Shiraiwa M."/>
            <person name="Kawada A."/>
            <person name="Mechin M.C."/>
            <person name="Adoue V."/>
            <person name="Chavanas S."/>
            <person name="Serre G."/>
            <person name="Simon M."/>
            <person name="Takahara H."/>
        </authorList>
    </citation>
    <scope>FUNCTION</scope>
</reference>
<reference key="8">
    <citation type="journal article" date="2013" name="J. Proteome Res.">
        <title>Toward a comprehensive characterization of a human cancer cell phosphoproteome.</title>
        <authorList>
            <person name="Zhou H."/>
            <person name="Di Palma S."/>
            <person name="Preisinger C."/>
            <person name="Peng M."/>
            <person name="Polat A.N."/>
            <person name="Heck A.J."/>
            <person name="Mohammed S."/>
        </authorList>
    </citation>
    <scope>PHOSPHORYLATION [LARGE SCALE ANALYSIS] AT SER-111</scope>
    <scope>IDENTIFICATION BY MASS SPECTROMETRY [LARGE SCALE ANALYSIS]</scope>
    <source>
        <tissue>Cervix carcinoma</tissue>
    </source>
</reference>
<reference key="9">
    <citation type="journal article" date="2017" name="Nat. Struct. Mol. Biol.">
        <title>Site-specific mapping of the human SUMO proteome reveals co-modification with phosphorylation.</title>
        <authorList>
            <person name="Hendriks I.A."/>
            <person name="Lyon D."/>
            <person name="Young C."/>
            <person name="Jensen L.J."/>
            <person name="Vertegaal A.C."/>
            <person name="Nielsen M.L."/>
        </authorList>
    </citation>
    <scope>SUMOYLATION [LARGE SCALE ANALYSIS] AT LYS-723</scope>
    <scope>IDENTIFICATION BY MASS SPECTROMETRY [LARGE SCALE ANALYSIS]</scope>
</reference>
<reference key="10">
    <citation type="journal article" date="2006" name="J. Mol. Biol.">
        <title>Structure of the SCAN domain from the tumor suppressor protein MZF1.</title>
        <authorList>
            <person name="Peterson F.C."/>
            <person name="Hayes P.L."/>
            <person name="Waltner J.K."/>
            <person name="Heisner A.K."/>
            <person name="Jensen D.R."/>
            <person name="Sander T.L."/>
            <person name="Volkman B.F."/>
        </authorList>
    </citation>
    <scope>STRUCTURE BY NMR OF 37-128</scope>
    <scope>SUBUNIT</scope>
</reference>